<gene>
    <name type="primary">sts5</name>
    <name type="ORF">SPCC16C4.09</name>
</gene>
<protein>
    <recommendedName>
        <fullName>Protein sts5</fullName>
    </recommendedName>
</protein>
<comment type="function">
    <text evidence="4">Required for the maintenance of cell shape during interphase. Required for localization of cortical actin to the growing tips before mitosis.</text>
</comment>
<comment type="subunit">
    <text>Interacts with serine/threonine phosphatase ppe1, protein kinase C and an osmosensing MAP kinase.</text>
</comment>
<comment type="subcellular location">
    <subcellularLocation>
        <location evidence="4">Cytoplasm</location>
    </subcellularLocation>
</comment>
<comment type="similarity">
    <text evidence="5">Belongs to the RNR ribonuclease family.</text>
</comment>
<keyword id="KW-0131">Cell cycle</keyword>
<keyword id="KW-0963">Cytoplasm</keyword>
<keyword id="KW-0269">Exonuclease</keyword>
<keyword id="KW-0378">Hydrolase</keyword>
<keyword id="KW-0540">Nuclease</keyword>
<keyword id="KW-0597">Phosphoprotein</keyword>
<keyword id="KW-1185">Reference proteome</keyword>
<name>STS5_SCHPO</name>
<sequence length="1066" mass="117604">MDEEFENDFPYKVMLNQQQDPSDAQSSPTFVPSANPSLTTPWLQTTPSANRPTWLPLQQHMHQLRHTGLLPAVESSFVHGHRRSASAGVGMGNFSNQATIPSNSPAVSNMQPPTQGGQPLYPTNFFTTSVSASSDSFPNSPTVPSKFSLNPSVATSTNISPRRHAKSHSVASVSSPNSHNAVPFTPHAFVPPVNNASPLPALNTLPQLLRPRNLDAQWRPSSLSQTNSPTHAANPSFPGTIVTHNTSNFRPEGGGHRHRRSTGSLSVGSSGSGFSSGGSGNPRKNLFSPYLPQSSIPALLAERRLVTGILIVSKKNRSDAFVSVDGLDAEVFICGSKDRNRALEGDVVAIELLDVDEVWAGKLEKEENRRRKDPISTRGSFDNLRIDAVPFEVPQRSAIKARDDEQVEGQTLFLLDQKQLGADEKPKYAGHVVAVLQRAPGQVFSGTLGILRPSSAANKERQTSSGNQGSSNNSGNDKPKIVWFKPSDKRVPLIAIPTEQAPTDFLGNDQAYAQRLFLASIKRWPVTSLHPFGMLVGELGSMDSMSAQVSALLHDTGVHSEPWEGSAATSAVTALNALSDNFLNVAGCADYRSEDVFLFVKNDVSKAAVSEVKQHESNINSSSATDFVSSAFHIRPTSTGYHVGIHVTDVSRVIEPGSPLDRELQRRSIAVNLCQKSVPLFPTTLGEALSLREDKDCYTMSLLLDVSSTGKIRGTWIGWAVIRPRKAYTMKEADELLQTDARLRLFHTVSSRLRTHHLGTDVPLSRYCRLVRRWDEESCSFDPNETNLFISSAVEVLRETLLDAANRAVASHLRQEFRENAFLRTQRLPSRENCRILQSMAIQMGCVLDLSSTKSLLRSLSLIEDDTVRNILQLYYYKVTPRAVYEMQKYKGNLASQMMSLGIEDESDDLTHFTAPLERYGDIVVHYQLQLLLRGELASEKRLRVWSQAANDASRRLVISKFAQETSIHIKIFSDWAESQVWQDGLVCFVAPSYFDVFFPSLGMEKRVHLDLLNLTHVRFEEDQGILSLYDESGAVTVVKLLTSVKVKLFVQLSTPPLINVSNVEF</sequence>
<reference key="1">
    <citation type="journal article" date="1996" name="J. Cell Sci.">
        <title>The fission yeast sts5+ gene is required for maintenance of growth polarity and functionally interacts with protein kinase C and an osmosensing MAP-kinase pathway.</title>
        <authorList>
            <person name="Toda T."/>
            <person name="Niwa H."/>
            <person name="Nemoto T."/>
            <person name="Dhut S."/>
            <person name="Eddison M."/>
            <person name="Matsusaka T."/>
            <person name="Yanagida M."/>
            <person name="Hirata D."/>
        </authorList>
    </citation>
    <scope>NUCLEOTIDE SEQUENCE [GENOMIC DNA]</scope>
    <scope>FUNCTION</scope>
    <scope>SUBCELLULAR LOCATION</scope>
</reference>
<reference key="2">
    <citation type="journal article" date="2002" name="Nature">
        <title>The genome sequence of Schizosaccharomyces pombe.</title>
        <authorList>
            <person name="Wood V."/>
            <person name="Gwilliam R."/>
            <person name="Rajandream M.A."/>
            <person name="Lyne M.H."/>
            <person name="Lyne R."/>
            <person name="Stewart A."/>
            <person name="Sgouros J.G."/>
            <person name="Peat N."/>
            <person name="Hayles J."/>
            <person name="Baker S.G."/>
            <person name="Basham D."/>
            <person name="Bowman S."/>
            <person name="Brooks K."/>
            <person name="Brown D."/>
            <person name="Brown S."/>
            <person name="Chillingworth T."/>
            <person name="Churcher C.M."/>
            <person name="Collins M."/>
            <person name="Connor R."/>
            <person name="Cronin A."/>
            <person name="Davis P."/>
            <person name="Feltwell T."/>
            <person name="Fraser A."/>
            <person name="Gentles S."/>
            <person name="Goble A."/>
            <person name="Hamlin N."/>
            <person name="Harris D.E."/>
            <person name="Hidalgo J."/>
            <person name="Hodgson G."/>
            <person name="Holroyd S."/>
            <person name="Hornsby T."/>
            <person name="Howarth S."/>
            <person name="Huckle E.J."/>
            <person name="Hunt S."/>
            <person name="Jagels K."/>
            <person name="James K.D."/>
            <person name="Jones L."/>
            <person name="Jones M."/>
            <person name="Leather S."/>
            <person name="McDonald S."/>
            <person name="McLean J."/>
            <person name="Mooney P."/>
            <person name="Moule S."/>
            <person name="Mungall K.L."/>
            <person name="Murphy L.D."/>
            <person name="Niblett D."/>
            <person name="Odell C."/>
            <person name="Oliver K."/>
            <person name="O'Neil S."/>
            <person name="Pearson D."/>
            <person name="Quail M.A."/>
            <person name="Rabbinowitsch E."/>
            <person name="Rutherford K.M."/>
            <person name="Rutter S."/>
            <person name="Saunders D."/>
            <person name="Seeger K."/>
            <person name="Sharp S."/>
            <person name="Skelton J."/>
            <person name="Simmonds M.N."/>
            <person name="Squares R."/>
            <person name="Squares S."/>
            <person name="Stevens K."/>
            <person name="Taylor K."/>
            <person name="Taylor R.G."/>
            <person name="Tivey A."/>
            <person name="Walsh S.V."/>
            <person name="Warren T."/>
            <person name="Whitehead S."/>
            <person name="Woodward J.R."/>
            <person name="Volckaert G."/>
            <person name="Aert R."/>
            <person name="Robben J."/>
            <person name="Grymonprez B."/>
            <person name="Weltjens I."/>
            <person name="Vanstreels E."/>
            <person name="Rieger M."/>
            <person name="Schaefer M."/>
            <person name="Mueller-Auer S."/>
            <person name="Gabel C."/>
            <person name="Fuchs M."/>
            <person name="Duesterhoeft A."/>
            <person name="Fritzc C."/>
            <person name="Holzer E."/>
            <person name="Moestl D."/>
            <person name="Hilbert H."/>
            <person name="Borzym K."/>
            <person name="Langer I."/>
            <person name="Beck A."/>
            <person name="Lehrach H."/>
            <person name="Reinhardt R."/>
            <person name="Pohl T.M."/>
            <person name="Eger P."/>
            <person name="Zimmermann W."/>
            <person name="Wedler H."/>
            <person name="Wambutt R."/>
            <person name="Purnelle B."/>
            <person name="Goffeau A."/>
            <person name="Cadieu E."/>
            <person name="Dreano S."/>
            <person name="Gloux S."/>
            <person name="Lelaure V."/>
            <person name="Mottier S."/>
            <person name="Galibert F."/>
            <person name="Aves S.J."/>
            <person name="Xiang Z."/>
            <person name="Hunt C."/>
            <person name="Moore K."/>
            <person name="Hurst S.M."/>
            <person name="Lucas M."/>
            <person name="Rochet M."/>
            <person name="Gaillardin C."/>
            <person name="Tallada V.A."/>
            <person name="Garzon A."/>
            <person name="Thode G."/>
            <person name="Daga R.R."/>
            <person name="Cruzado L."/>
            <person name="Jimenez J."/>
            <person name="Sanchez M."/>
            <person name="del Rey F."/>
            <person name="Benito J."/>
            <person name="Dominguez A."/>
            <person name="Revuelta J.L."/>
            <person name="Moreno S."/>
            <person name="Armstrong J."/>
            <person name="Forsburg S.L."/>
            <person name="Cerutti L."/>
            <person name="Lowe T."/>
            <person name="McCombie W.R."/>
            <person name="Paulsen I."/>
            <person name="Potashkin J."/>
            <person name="Shpakovski G.V."/>
            <person name="Ussery D."/>
            <person name="Barrell B.G."/>
            <person name="Nurse P."/>
        </authorList>
    </citation>
    <scope>NUCLEOTIDE SEQUENCE [LARGE SCALE GENOMIC DNA]</scope>
    <source>
        <strain>972 / ATCC 24843</strain>
    </source>
</reference>
<reference key="3">
    <citation type="journal article" date="2008" name="J. Proteome Res.">
        <title>Phosphoproteome analysis of fission yeast.</title>
        <authorList>
            <person name="Wilson-Grady J.T."/>
            <person name="Villen J."/>
            <person name="Gygi S.P."/>
        </authorList>
    </citation>
    <scope>PHOSPHORYLATION [LARGE SCALE ANALYSIS] AT THR-157; THR-262; SER-264 AND THR-377</scope>
    <scope>IDENTIFICATION BY MASS SPECTROMETRY</scope>
</reference>
<dbReference type="EMBL" id="D58421">
    <property type="protein sequence ID" value="BAA23619.1"/>
    <property type="molecule type" value="Genomic_DNA"/>
</dbReference>
<dbReference type="EMBL" id="CU329672">
    <property type="protein sequence ID" value="CAA20748.1"/>
    <property type="molecule type" value="Genomic_DNA"/>
</dbReference>
<dbReference type="PIR" id="T41099">
    <property type="entry name" value="T41099"/>
</dbReference>
<dbReference type="PIR" id="T45283">
    <property type="entry name" value="T45283"/>
</dbReference>
<dbReference type="RefSeq" id="NP_587919.1">
    <property type="nucleotide sequence ID" value="NM_001022910.2"/>
</dbReference>
<dbReference type="SMR" id="O74454"/>
<dbReference type="BioGRID" id="275751">
    <property type="interactions" value="320"/>
</dbReference>
<dbReference type="FunCoup" id="O74454">
    <property type="interactions" value="40"/>
</dbReference>
<dbReference type="STRING" id="284812.O74454"/>
<dbReference type="iPTMnet" id="O74454"/>
<dbReference type="PaxDb" id="4896-SPCC16C4.09.1"/>
<dbReference type="EnsemblFungi" id="SPCC16C4.09.1">
    <property type="protein sequence ID" value="SPCC16C4.09.1:pep"/>
    <property type="gene ID" value="SPCC16C4.09"/>
</dbReference>
<dbReference type="GeneID" id="2539180"/>
<dbReference type="KEGG" id="spo:2539180"/>
<dbReference type="PomBase" id="SPCC16C4.09">
    <property type="gene designation" value="sts5"/>
</dbReference>
<dbReference type="VEuPathDB" id="FungiDB:SPCC16C4.09"/>
<dbReference type="eggNOG" id="KOG2102">
    <property type="taxonomic scope" value="Eukaryota"/>
</dbReference>
<dbReference type="HOGENOM" id="CLU_282442_0_0_1"/>
<dbReference type="InParanoid" id="O74454"/>
<dbReference type="OMA" id="SIKRWPV"/>
<dbReference type="PhylomeDB" id="O74454"/>
<dbReference type="CD-CODE" id="0808F6DD">
    <property type="entry name" value="P-body"/>
</dbReference>
<dbReference type="PRO" id="PR:O74454"/>
<dbReference type="Proteomes" id="UP000002485">
    <property type="component" value="Chromosome III"/>
</dbReference>
<dbReference type="GO" id="GO:0032153">
    <property type="term" value="C:cell division site"/>
    <property type="evidence" value="ECO:0007005"/>
    <property type="project" value="PomBase"/>
</dbReference>
<dbReference type="GO" id="GO:0005737">
    <property type="term" value="C:cytoplasm"/>
    <property type="evidence" value="ECO:0000314"/>
    <property type="project" value="PomBase"/>
</dbReference>
<dbReference type="GO" id="GO:0005829">
    <property type="term" value="C:cytosol"/>
    <property type="evidence" value="ECO:0007005"/>
    <property type="project" value="PomBase"/>
</dbReference>
<dbReference type="GO" id="GO:0000932">
    <property type="term" value="C:P-body"/>
    <property type="evidence" value="ECO:0000318"/>
    <property type="project" value="GO_Central"/>
</dbReference>
<dbReference type="GO" id="GO:0000175">
    <property type="term" value="F:3'-5'-RNA exonuclease activity"/>
    <property type="evidence" value="ECO:0000318"/>
    <property type="project" value="GO_Central"/>
</dbReference>
<dbReference type="GO" id="GO:0003723">
    <property type="term" value="F:RNA binding"/>
    <property type="evidence" value="ECO:0000255"/>
    <property type="project" value="PomBase"/>
</dbReference>
<dbReference type="GO" id="GO:0006402">
    <property type="term" value="P:mRNA catabolic process"/>
    <property type="evidence" value="ECO:0000318"/>
    <property type="project" value="GO_Central"/>
</dbReference>
<dbReference type="GO" id="GO:0000956">
    <property type="term" value="P:nuclear-transcribed mRNA catabolic process"/>
    <property type="evidence" value="ECO:0000266"/>
    <property type="project" value="PomBase"/>
</dbReference>
<dbReference type="FunFam" id="2.40.50.700:FF:000002">
    <property type="entry name" value="Cell wall biogenesis protein"/>
    <property type="match status" value="1"/>
</dbReference>
<dbReference type="Gene3D" id="2.40.50.690">
    <property type="match status" value="1"/>
</dbReference>
<dbReference type="Gene3D" id="2.40.50.700">
    <property type="match status" value="1"/>
</dbReference>
<dbReference type="Gene3D" id="2.40.50.140">
    <property type="entry name" value="Nucleic acid-binding proteins"/>
    <property type="match status" value="1"/>
</dbReference>
<dbReference type="InterPro" id="IPR041505">
    <property type="entry name" value="Dis3_CSD2"/>
</dbReference>
<dbReference type="InterPro" id="IPR041093">
    <property type="entry name" value="Dis3l2-like_C"/>
</dbReference>
<dbReference type="InterPro" id="IPR012340">
    <property type="entry name" value="NA-bd_OB-fold"/>
</dbReference>
<dbReference type="InterPro" id="IPR001900">
    <property type="entry name" value="RNase_II/R"/>
</dbReference>
<dbReference type="InterPro" id="IPR050180">
    <property type="entry name" value="RNR_Ribonuclease"/>
</dbReference>
<dbReference type="PANTHER" id="PTHR23355:SF61">
    <property type="entry name" value="PROTEIN STS5"/>
    <property type="match status" value="1"/>
</dbReference>
<dbReference type="PANTHER" id="PTHR23355">
    <property type="entry name" value="RIBONUCLEASE"/>
    <property type="match status" value="1"/>
</dbReference>
<dbReference type="Pfam" id="PF17877">
    <property type="entry name" value="Dis3l2_C_term"/>
    <property type="match status" value="1"/>
</dbReference>
<dbReference type="Pfam" id="PF17849">
    <property type="entry name" value="OB_Dis3"/>
    <property type="match status" value="1"/>
</dbReference>
<dbReference type="Pfam" id="PF00773">
    <property type="entry name" value="RNB"/>
    <property type="match status" value="1"/>
</dbReference>
<dbReference type="SMART" id="SM00955">
    <property type="entry name" value="RNB"/>
    <property type="match status" value="1"/>
</dbReference>
<dbReference type="SUPFAM" id="SSF50249">
    <property type="entry name" value="Nucleic acid-binding proteins"/>
    <property type="match status" value="2"/>
</dbReference>
<evidence type="ECO:0000255" key="1"/>
<evidence type="ECO:0000256" key="2">
    <source>
        <dbReference type="SAM" id="MobiDB-lite"/>
    </source>
</evidence>
<evidence type="ECO:0000269" key="3">
    <source>
    </source>
</evidence>
<evidence type="ECO:0000269" key="4">
    <source>
    </source>
</evidence>
<evidence type="ECO:0000305" key="5"/>
<proteinExistence type="evidence at protein level"/>
<organism>
    <name type="scientific">Schizosaccharomyces pombe (strain 972 / ATCC 24843)</name>
    <name type="common">Fission yeast</name>
    <dbReference type="NCBI Taxonomy" id="284812"/>
    <lineage>
        <taxon>Eukaryota</taxon>
        <taxon>Fungi</taxon>
        <taxon>Dikarya</taxon>
        <taxon>Ascomycota</taxon>
        <taxon>Taphrinomycotina</taxon>
        <taxon>Schizosaccharomycetes</taxon>
        <taxon>Schizosaccharomycetales</taxon>
        <taxon>Schizosaccharomycetaceae</taxon>
        <taxon>Schizosaccharomyces</taxon>
    </lineage>
</organism>
<accession>O74454</accession>
<accession>O13452</accession>
<feature type="chain" id="PRO_0000166422" description="Protein sts5">
    <location>
        <begin position="1"/>
        <end position="1066"/>
    </location>
</feature>
<feature type="domain" description="CSD2" evidence="1">
    <location>
        <begin position="482"/>
        <end position="556"/>
    </location>
</feature>
<feature type="domain" description="RNB" evidence="1">
    <location>
        <begin position="618"/>
        <end position="934"/>
    </location>
</feature>
<feature type="domain" description="DIS3L2 C-terminal" evidence="1">
    <location>
        <begin position="983"/>
        <end position="1033"/>
    </location>
</feature>
<feature type="region of interest" description="Disordered" evidence="2">
    <location>
        <begin position="18"/>
        <end position="40"/>
    </location>
</feature>
<feature type="region of interest" description="Disordered" evidence="2">
    <location>
        <begin position="154"/>
        <end position="178"/>
    </location>
</feature>
<feature type="region of interest" description="Disordered" evidence="2">
    <location>
        <begin position="247"/>
        <end position="286"/>
    </location>
</feature>
<feature type="region of interest" description="Disordered" evidence="2">
    <location>
        <begin position="454"/>
        <end position="480"/>
    </location>
</feature>
<feature type="compositionally biased region" description="Low complexity" evidence="2">
    <location>
        <begin position="18"/>
        <end position="28"/>
    </location>
</feature>
<feature type="compositionally biased region" description="Polar residues" evidence="2">
    <location>
        <begin position="29"/>
        <end position="40"/>
    </location>
</feature>
<feature type="compositionally biased region" description="Low complexity" evidence="2">
    <location>
        <begin position="168"/>
        <end position="178"/>
    </location>
</feature>
<feature type="compositionally biased region" description="Gly residues" evidence="2">
    <location>
        <begin position="270"/>
        <end position="280"/>
    </location>
</feature>
<feature type="compositionally biased region" description="Low complexity" evidence="2">
    <location>
        <begin position="464"/>
        <end position="476"/>
    </location>
</feature>
<feature type="modified residue" description="Phosphothreonine" evidence="3">
    <location>
        <position position="157"/>
    </location>
</feature>
<feature type="modified residue" description="Phosphothreonine" evidence="3">
    <location>
        <position position="262"/>
    </location>
</feature>
<feature type="modified residue" description="Phosphoserine" evidence="3">
    <location>
        <position position="264"/>
    </location>
</feature>
<feature type="modified residue" description="Phosphothreonine" evidence="3">
    <location>
        <position position="377"/>
    </location>
</feature>
<feature type="sequence conflict" description="In Ref. 1; BAA23619." evidence="5" ref="1">
    <original>F</original>
    <variation>C</variation>
    <location>
        <position position="5"/>
    </location>
</feature>
<feature type="sequence conflict" description="In Ref. 1; BAA23619." evidence="5" ref="1">
    <original>V</original>
    <variation>G</variation>
    <location>
        <position position="794"/>
    </location>
</feature>